<comment type="subunit">
    <text evidence="1">Part of the 50S ribosomal subunit.</text>
</comment>
<comment type="subcellular location">
    <subcellularLocation>
        <location>Plastid</location>
        <location>Chloroplast</location>
    </subcellularLocation>
</comment>
<comment type="RNA editing">
    <location>
        <position position="29" evidence="3 4"/>
    </location>
    <location>
        <position position="35" evidence="3 4"/>
    </location>
    <location>
        <position position="104" evidence="3 4"/>
    </location>
    <location>
        <position position="110" evidence="3 4"/>
    </location>
    <text>The nonsense codon at position 35 is modified to a sense codon.</text>
</comment>
<comment type="similarity">
    <text evidence="1">Belongs to the universal ribosomal protein uL16 family.</text>
</comment>
<reference key="1">
    <citation type="journal article" date="2003" name="Nucleic Acids Res.">
        <title>The complete nucleotide sequence of the hornwort (Anthoceros formosae) chloroplast genome: insight into the earliest land plants.</title>
        <authorList>
            <person name="Kugita M."/>
            <person name="Kaneko A."/>
            <person name="Yamamoto Y."/>
            <person name="Takeya Y."/>
            <person name="Matsumoto T."/>
            <person name="Yoshinaga K."/>
        </authorList>
    </citation>
    <scope>NUCLEOTIDE SEQUENCE [LARGE SCALE GENOMIC DNA]</scope>
    <scope>RNA EDITING</scope>
</reference>
<reference key="2">
    <citation type="journal article" date="2003" name="Nucleic Acids Res.">
        <title>RNA editing in hornwort chloroplasts makes more than half the genes functional.</title>
        <authorList>
            <person name="Kugita M."/>
            <person name="Yamamoto Y."/>
            <person name="Fujikawa T."/>
            <person name="Matsumoto T."/>
            <person name="Yoshinaga K."/>
        </authorList>
    </citation>
    <scope>NUCLEOTIDE SEQUENCE [MRNA]</scope>
    <scope>RNA EDITING</scope>
    <source>
        <tissue>Thallus</tissue>
    </source>
</reference>
<protein>
    <recommendedName>
        <fullName evidence="1">Large ribosomal subunit protein uL16c</fullName>
    </recommendedName>
    <alternativeName>
        <fullName evidence="5">50S ribosomal protein L16, chloroplastic</fullName>
    </alternativeName>
</protein>
<name>RK16_ANTAG</name>
<sequence length="136" mass="15456">MLSPKRVKFRKQHRGRMKGISTRGNQICSGKFAPQALEPAWITSRQIEAGRRAISRYARRGGKIWIRIFPDKPVTMRPAETRMGSGKGSPEFWVSVVKPNRILYEIGGVPEDIAKAAIRIAAYKMPIRTQFIILHL</sequence>
<gene>
    <name evidence="1" type="primary">rpl16</name>
</gene>
<geneLocation type="chloroplast"/>
<evidence type="ECO:0000255" key="1">
    <source>
        <dbReference type="HAMAP-Rule" id="MF_01342"/>
    </source>
</evidence>
<evidence type="ECO:0000256" key="2">
    <source>
        <dbReference type="SAM" id="MobiDB-lite"/>
    </source>
</evidence>
<evidence type="ECO:0000269" key="3">
    <source>
    </source>
</evidence>
<evidence type="ECO:0000269" key="4">
    <source>
    </source>
</evidence>
<evidence type="ECO:0000305" key="5"/>
<organism>
    <name type="scientific">Anthoceros angustus</name>
    <name type="common">Hornwort</name>
    <name type="synonym">Anthoceros formosae</name>
    <dbReference type="NCBI Taxonomy" id="48387"/>
    <lineage>
        <taxon>Eukaryota</taxon>
        <taxon>Viridiplantae</taxon>
        <taxon>Streptophyta</taxon>
        <taxon>Embryophyta</taxon>
        <taxon>Anthocerotophyta</taxon>
        <taxon>Anthocerotopsida</taxon>
        <taxon>Anthocerotidae</taxon>
        <taxon>Anthocerotales</taxon>
        <taxon>Anthocerotaceae</taxon>
        <taxon>Anthoceros</taxon>
    </lineage>
</organism>
<dbReference type="EMBL" id="AB086179">
    <property type="protein sequence ID" value="BAC55387.1"/>
    <property type="molecule type" value="Genomic_DNA"/>
</dbReference>
<dbReference type="EMBL" id="AB087470">
    <property type="protein sequence ID" value="BAC55484.1"/>
    <property type="molecule type" value="mRNA"/>
</dbReference>
<dbReference type="RefSeq" id="NP_777451.1">
    <property type="nucleotide sequence ID" value="NC_004543.1"/>
</dbReference>
<dbReference type="SMR" id="Q85C49"/>
<dbReference type="GeneID" id="2553413"/>
<dbReference type="GO" id="GO:0009507">
    <property type="term" value="C:chloroplast"/>
    <property type="evidence" value="ECO:0007669"/>
    <property type="project" value="UniProtKB-SubCell"/>
</dbReference>
<dbReference type="GO" id="GO:0005762">
    <property type="term" value="C:mitochondrial large ribosomal subunit"/>
    <property type="evidence" value="ECO:0007669"/>
    <property type="project" value="TreeGrafter"/>
</dbReference>
<dbReference type="GO" id="GO:0019843">
    <property type="term" value="F:rRNA binding"/>
    <property type="evidence" value="ECO:0007669"/>
    <property type="project" value="InterPro"/>
</dbReference>
<dbReference type="GO" id="GO:0003735">
    <property type="term" value="F:structural constituent of ribosome"/>
    <property type="evidence" value="ECO:0007669"/>
    <property type="project" value="InterPro"/>
</dbReference>
<dbReference type="GO" id="GO:0032543">
    <property type="term" value="P:mitochondrial translation"/>
    <property type="evidence" value="ECO:0007669"/>
    <property type="project" value="TreeGrafter"/>
</dbReference>
<dbReference type="CDD" id="cd01433">
    <property type="entry name" value="Ribosomal_L16_L10e"/>
    <property type="match status" value="1"/>
</dbReference>
<dbReference type="FunFam" id="3.90.1170.10:FF:000001">
    <property type="entry name" value="50S ribosomal protein L16"/>
    <property type="match status" value="1"/>
</dbReference>
<dbReference type="Gene3D" id="3.90.1170.10">
    <property type="entry name" value="Ribosomal protein L10e/L16"/>
    <property type="match status" value="1"/>
</dbReference>
<dbReference type="HAMAP" id="MF_01342">
    <property type="entry name" value="Ribosomal_uL16"/>
    <property type="match status" value="1"/>
</dbReference>
<dbReference type="InterPro" id="IPR047873">
    <property type="entry name" value="Ribosomal_uL16"/>
</dbReference>
<dbReference type="InterPro" id="IPR000114">
    <property type="entry name" value="Ribosomal_uL16_bact-type"/>
</dbReference>
<dbReference type="InterPro" id="IPR020798">
    <property type="entry name" value="Ribosomal_uL16_CS"/>
</dbReference>
<dbReference type="InterPro" id="IPR016180">
    <property type="entry name" value="Ribosomal_uL16_dom"/>
</dbReference>
<dbReference type="InterPro" id="IPR036920">
    <property type="entry name" value="Ribosomal_uL16_sf"/>
</dbReference>
<dbReference type="NCBIfam" id="TIGR01164">
    <property type="entry name" value="rplP_bact"/>
    <property type="match status" value="1"/>
</dbReference>
<dbReference type="PANTHER" id="PTHR12220">
    <property type="entry name" value="50S/60S RIBOSOMAL PROTEIN L16"/>
    <property type="match status" value="1"/>
</dbReference>
<dbReference type="PANTHER" id="PTHR12220:SF13">
    <property type="entry name" value="LARGE RIBOSOMAL SUBUNIT PROTEIN UL16M"/>
    <property type="match status" value="1"/>
</dbReference>
<dbReference type="Pfam" id="PF00252">
    <property type="entry name" value="Ribosomal_L16"/>
    <property type="match status" value="1"/>
</dbReference>
<dbReference type="PRINTS" id="PR00060">
    <property type="entry name" value="RIBOSOMALL16"/>
</dbReference>
<dbReference type="SUPFAM" id="SSF54686">
    <property type="entry name" value="Ribosomal protein L16p/L10e"/>
    <property type="match status" value="1"/>
</dbReference>
<dbReference type="PROSITE" id="PS00586">
    <property type="entry name" value="RIBOSOMAL_L16_1"/>
    <property type="match status" value="1"/>
</dbReference>
<dbReference type="PROSITE" id="PS00701">
    <property type="entry name" value="RIBOSOMAL_L16_2"/>
    <property type="match status" value="1"/>
</dbReference>
<proteinExistence type="evidence at transcript level"/>
<keyword id="KW-0150">Chloroplast</keyword>
<keyword id="KW-0934">Plastid</keyword>
<keyword id="KW-0687">Ribonucleoprotein</keyword>
<keyword id="KW-0689">Ribosomal protein</keyword>
<keyword id="KW-0691">RNA editing</keyword>
<accession>Q85C49</accession>
<feature type="chain" id="PRO_0000062267" description="Large ribosomal subunit protein uL16c">
    <location>
        <begin position="1"/>
        <end position="136"/>
    </location>
</feature>
<feature type="region of interest" description="Disordered" evidence="2">
    <location>
        <begin position="1"/>
        <end position="25"/>
    </location>
</feature>
<feature type="compositionally biased region" description="Basic residues" evidence="2">
    <location>
        <begin position="1"/>
        <end position="17"/>
    </location>
</feature>